<dbReference type="EC" id="4.6.1.19"/>
<dbReference type="EMBL" id="D00238">
    <property type="protein sequence ID" value="BAA00167.1"/>
    <property type="molecule type" value="Genomic_DNA"/>
</dbReference>
<dbReference type="EMBL" id="D12476">
    <property type="protein sequence ID" value="BAA02042.1"/>
    <property type="molecule type" value="mRNA"/>
</dbReference>
<dbReference type="PIR" id="JH0367">
    <property type="entry name" value="JH0367"/>
</dbReference>
<dbReference type="PDB" id="1BOL">
    <property type="method" value="X-ray"/>
    <property type="resolution" value="2.00 A"/>
    <property type="chains" value="A=17-238"/>
</dbReference>
<dbReference type="PDBsum" id="1BOL"/>
<dbReference type="SMR" id="P08056"/>
<dbReference type="EvolutionaryTrace" id="P08056"/>
<dbReference type="GO" id="GO:0005576">
    <property type="term" value="C:extracellular region"/>
    <property type="evidence" value="ECO:0007669"/>
    <property type="project" value="TreeGrafter"/>
</dbReference>
<dbReference type="GO" id="GO:0033897">
    <property type="term" value="F:ribonuclease T2 activity"/>
    <property type="evidence" value="ECO:0007669"/>
    <property type="project" value="UniProtKB-EC"/>
</dbReference>
<dbReference type="GO" id="GO:0003723">
    <property type="term" value="F:RNA binding"/>
    <property type="evidence" value="ECO:0007669"/>
    <property type="project" value="InterPro"/>
</dbReference>
<dbReference type="GO" id="GO:0006401">
    <property type="term" value="P:RNA catabolic process"/>
    <property type="evidence" value="ECO:0007669"/>
    <property type="project" value="TreeGrafter"/>
</dbReference>
<dbReference type="CDD" id="cd01061">
    <property type="entry name" value="RNase_T2_euk"/>
    <property type="match status" value="1"/>
</dbReference>
<dbReference type="Gene3D" id="3.90.730.10">
    <property type="entry name" value="Ribonuclease T2-like"/>
    <property type="match status" value="1"/>
</dbReference>
<dbReference type="InterPro" id="IPR033697">
    <property type="entry name" value="Ribonuclease_T2_eukaryotic"/>
</dbReference>
<dbReference type="InterPro" id="IPR001568">
    <property type="entry name" value="RNase_T2-like"/>
</dbReference>
<dbReference type="InterPro" id="IPR036430">
    <property type="entry name" value="RNase_T2-like_sf"/>
</dbReference>
<dbReference type="InterPro" id="IPR018188">
    <property type="entry name" value="RNase_T2_His_AS_1"/>
</dbReference>
<dbReference type="InterPro" id="IPR033130">
    <property type="entry name" value="RNase_T2_His_AS_2"/>
</dbReference>
<dbReference type="PANTHER" id="PTHR11240">
    <property type="entry name" value="RIBONUCLEASE T2"/>
    <property type="match status" value="1"/>
</dbReference>
<dbReference type="PANTHER" id="PTHR11240:SF22">
    <property type="entry name" value="RIBONUCLEASE T2"/>
    <property type="match status" value="1"/>
</dbReference>
<dbReference type="Pfam" id="PF00445">
    <property type="entry name" value="Ribonuclease_T2"/>
    <property type="match status" value="1"/>
</dbReference>
<dbReference type="SUPFAM" id="SSF55895">
    <property type="entry name" value="Ribonuclease Rh-like"/>
    <property type="match status" value="1"/>
</dbReference>
<dbReference type="PROSITE" id="PS00530">
    <property type="entry name" value="RNASE_T2_1"/>
    <property type="match status" value="1"/>
</dbReference>
<dbReference type="PROSITE" id="PS00531">
    <property type="entry name" value="RNASE_T2_2"/>
    <property type="match status" value="1"/>
</dbReference>
<accession>P08056</accession>
<name>RNRH_RHINI</name>
<evidence type="ECO:0000255" key="1">
    <source>
        <dbReference type="PROSITE-ProRule" id="PRU10045"/>
    </source>
</evidence>
<evidence type="ECO:0000255" key="2">
    <source>
        <dbReference type="PROSITE-ProRule" id="PRU10046"/>
    </source>
</evidence>
<evidence type="ECO:0000269" key="3">
    <source>
    </source>
</evidence>
<evidence type="ECO:0000269" key="4">
    <source>
    </source>
</evidence>
<evidence type="ECO:0000305" key="5"/>
<evidence type="ECO:0007829" key="6">
    <source>
        <dbReference type="PDB" id="1BOL"/>
    </source>
</evidence>
<organism>
    <name type="scientific">Rhizopus niveus</name>
    <dbReference type="NCBI Taxonomy" id="4844"/>
    <lineage>
        <taxon>Eukaryota</taxon>
        <taxon>Fungi</taxon>
        <taxon>Fungi incertae sedis</taxon>
        <taxon>Mucoromycota</taxon>
        <taxon>Mucoromycotina</taxon>
        <taxon>Mucoromycetes</taxon>
        <taxon>Mucorales</taxon>
        <taxon>Mucorineae</taxon>
        <taxon>Rhizopodaceae</taxon>
        <taxon>Rhizopus</taxon>
    </lineage>
</organism>
<reference key="1">
    <citation type="journal article" date="1988" name="J. Biochem.">
        <title>Primary structure of a base non-specific ribonuclease from Rhizopus niveus.</title>
        <authorList>
            <person name="Horiuchi H."/>
            <person name="Yanai K."/>
            <person name="Takagi M."/>
            <person name="Yano K."/>
            <person name="Wakabayashi E."/>
            <person name="Sanda A."/>
            <person name="Mine S."/>
            <person name="Ohgi K."/>
            <person name="Irie M."/>
        </authorList>
    </citation>
    <scope>NUCLEOTIDE SEQUENCE [GENOMIC DNA]</scope>
    <scope>PROTEIN SEQUENCE OF 17-238</scope>
    <source>
        <strain>NBRC 4810 / AS 3.4817</strain>
    </source>
</reference>
<reference key="2">
    <citation type="journal article" date="1991" name="J. Biochem.">
        <title>Expression of RNase Rh from Rhizopus niveus in yeast and characterization of the secreted proteins.</title>
        <authorList>
            <person name="Ohgi K."/>
            <person name="Horiuchi H."/>
            <person name="Watanabe H."/>
            <person name="Takagi M."/>
            <person name="Yano K."/>
            <person name="Irie M."/>
        </authorList>
    </citation>
    <scope>NUCLEOTIDE SEQUENCE</scope>
    <source>
        <strain>NBRC 4810 / AS 3.4817</strain>
    </source>
</reference>
<reference key="3">
    <citation type="journal article" date="1992" name="FEBS Lett.">
        <title>Crystal and molecular structure of RNase Rh, a new class of microbial ribonuclease from Rhizopus niveus.</title>
        <authorList>
            <person name="Kurihara H."/>
            <person name="Mitsui Y."/>
            <person name="Ohgi K."/>
            <person name="Irie M."/>
            <person name="Mizuno H."/>
            <person name="Nakamura K.T."/>
        </authorList>
    </citation>
    <scope>X-RAY CRYSTALLOGRAPHY (2.5 ANGSTROMS)</scope>
</reference>
<reference key="4">
    <citation type="journal article" date="1996" name="J. Mol. Biol.">
        <title>The crystal structure of ribonuclease Rh from Rhizopus niveus at 2.0-A resolution.</title>
        <authorList>
            <person name="Kurihara H."/>
            <person name="Nonaka T."/>
            <person name="Mitsui Y."/>
            <person name="Ohgi K."/>
            <person name="Irie M."/>
            <person name="Nakamura K.T."/>
        </authorList>
    </citation>
    <scope>X-RAY CRYSTALLOGRAPHY (2.0 ANGSTROMS)</scope>
    <scope>DISULFIDE BOND</scope>
    <scope>ACTIVE SITE</scope>
</reference>
<proteinExistence type="evidence at protein level"/>
<sequence length="238" mass="25635">MKAVLALATLIGSTLASSCSSTALSCSNSANSDTCCSPEYGLVVLNMQWAPGYGPDNAFTLHGLWPDKCSGAYAPSGGCDSNRASSSIASVIKSKDSSLYNSMLTYWPSNQGNNNVFWSHEWSKHGTCVSTYDPDCYDNYEEGEDIVDYFQKAMDLRSQYNVYKAFSSNGITPGGTYTATEMQSAIESYFGAKAKIDCSSGTLSDVALYFYVRGRDTYVITDALSTGSCSGDVEYPTK</sequence>
<feature type="signal peptide" evidence="3">
    <location>
        <begin position="1"/>
        <end position="16"/>
    </location>
</feature>
<feature type="chain" id="PRO_0000030964" description="Ribonuclease Rh">
    <location>
        <begin position="17"/>
        <end position="238"/>
    </location>
</feature>
<feature type="active site" evidence="4">
    <location>
        <position position="62"/>
    </location>
</feature>
<feature type="active site" evidence="4">
    <location>
        <position position="121"/>
    </location>
</feature>
<feature type="active site" evidence="4">
    <location>
        <position position="125"/>
    </location>
</feature>
<feature type="disulfide bond" evidence="4">
    <location>
        <begin position="19"/>
        <end position="36"/>
    </location>
</feature>
<feature type="disulfide bond" evidence="4">
    <location>
        <begin position="26"/>
        <end position="69"/>
    </location>
</feature>
<feature type="disulfide bond" evidence="4">
    <location>
        <begin position="35"/>
        <end position="136"/>
    </location>
</feature>
<feature type="disulfide bond" evidence="4">
    <location>
        <begin position="79"/>
        <end position="128"/>
    </location>
</feature>
<feature type="disulfide bond" evidence="4">
    <location>
        <begin position="198"/>
        <end position="229"/>
    </location>
</feature>
<feature type="sequence conflict" description="In Ref. 1; BAA00167." evidence="5" ref="1">
    <original>NRA</original>
    <variation>SLY</variation>
    <location>
        <begin position="82"/>
        <end position="84"/>
    </location>
</feature>
<feature type="strand" evidence="6">
    <location>
        <begin position="24"/>
        <end position="27"/>
    </location>
</feature>
<feature type="turn" evidence="6">
    <location>
        <begin position="34"/>
        <end position="36"/>
    </location>
</feature>
<feature type="strand" evidence="6">
    <location>
        <begin position="42"/>
        <end position="48"/>
    </location>
</feature>
<feature type="strand" evidence="6">
    <location>
        <begin position="60"/>
        <end position="67"/>
    </location>
</feature>
<feature type="helix" evidence="6">
    <location>
        <begin position="88"/>
        <end position="95"/>
    </location>
</feature>
<feature type="helix" evidence="6">
    <location>
        <begin position="97"/>
        <end position="106"/>
    </location>
</feature>
<feature type="helix" evidence="6">
    <location>
        <begin position="114"/>
        <end position="124"/>
    </location>
</feature>
<feature type="helix" evidence="6">
    <location>
        <begin position="126"/>
        <end position="128"/>
    </location>
</feature>
<feature type="helix" evidence="6">
    <location>
        <begin position="130"/>
        <end position="132"/>
    </location>
</feature>
<feature type="helix" evidence="6">
    <location>
        <begin position="134"/>
        <end position="136"/>
    </location>
</feature>
<feature type="helix" evidence="6">
    <location>
        <begin position="144"/>
        <end position="159"/>
    </location>
</feature>
<feature type="helix" evidence="6">
    <location>
        <begin position="162"/>
        <end position="167"/>
    </location>
</feature>
<feature type="turn" evidence="6">
    <location>
        <begin position="168"/>
        <end position="170"/>
    </location>
</feature>
<feature type="strand" evidence="6">
    <location>
        <begin position="173"/>
        <end position="178"/>
    </location>
</feature>
<feature type="helix" evidence="6">
    <location>
        <begin position="179"/>
        <end position="190"/>
    </location>
</feature>
<feature type="strand" evidence="6">
    <location>
        <begin position="195"/>
        <end position="199"/>
    </location>
</feature>
<feature type="strand" evidence="6">
    <location>
        <begin position="202"/>
        <end position="213"/>
    </location>
</feature>
<feature type="turn" evidence="6">
    <location>
        <begin position="214"/>
        <end position="216"/>
    </location>
</feature>
<feature type="strand" evidence="6">
    <location>
        <begin position="217"/>
        <end position="221"/>
    </location>
</feature>
<feature type="strand" evidence="6">
    <location>
        <begin position="231"/>
        <end position="235"/>
    </location>
</feature>
<comment type="function">
    <text>This is a base non-specific ribonuclease.</text>
</comment>
<comment type="catalytic activity">
    <reaction evidence="1 2">
        <text>a ribonucleotidyl-ribonucleotide-RNA + H2O = a 3'-end 3'-phospho-ribonucleotide-RNA + a 5'-end dephospho-ribonucleoside-RNA + H(+)</text>
        <dbReference type="Rhea" id="RHEA:68052"/>
        <dbReference type="Rhea" id="RHEA-COMP:10463"/>
        <dbReference type="Rhea" id="RHEA-COMP:13936"/>
        <dbReference type="Rhea" id="RHEA-COMP:17355"/>
        <dbReference type="ChEBI" id="CHEBI:15377"/>
        <dbReference type="ChEBI" id="CHEBI:15378"/>
        <dbReference type="ChEBI" id="CHEBI:83062"/>
        <dbReference type="ChEBI" id="CHEBI:138284"/>
        <dbReference type="ChEBI" id="CHEBI:173118"/>
        <dbReference type="EC" id="4.6.1.19"/>
    </reaction>
</comment>
<comment type="similarity">
    <text evidence="5">Belongs to the RNase T2 family.</text>
</comment>
<keyword id="KW-0002">3D-structure</keyword>
<keyword id="KW-0903">Direct protein sequencing</keyword>
<keyword id="KW-1015">Disulfide bond</keyword>
<keyword id="KW-0255">Endonuclease</keyword>
<keyword id="KW-0378">Hydrolase</keyword>
<keyword id="KW-0456">Lyase</keyword>
<keyword id="KW-0540">Nuclease</keyword>
<keyword id="KW-0732">Signal</keyword>
<protein>
    <recommendedName>
        <fullName>Ribonuclease Rh</fullName>
        <shortName>RNase Rh</shortName>
        <ecNumber>4.6.1.19</ecNumber>
    </recommendedName>
</protein>